<dbReference type="EMBL" id="CP001120">
    <property type="protein sequence ID" value="ACF70466.1"/>
    <property type="molecule type" value="Genomic_DNA"/>
</dbReference>
<dbReference type="RefSeq" id="WP_001090898.1">
    <property type="nucleotide sequence ID" value="NC_011083.1"/>
</dbReference>
<dbReference type="SMR" id="B4TD94"/>
<dbReference type="KEGG" id="seh:SeHA_C2782"/>
<dbReference type="HOGENOM" id="CLU_047530_3_1_6"/>
<dbReference type="Proteomes" id="UP000001866">
    <property type="component" value="Chromosome"/>
</dbReference>
<dbReference type="GO" id="GO:0005886">
    <property type="term" value="C:plasma membrane"/>
    <property type="evidence" value="ECO:0007669"/>
    <property type="project" value="UniProtKB-SubCell"/>
</dbReference>
<dbReference type="GO" id="GO:0003677">
    <property type="term" value="F:DNA binding"/>
    <property type="evidence" value="ECO:0007669"/>
    <property type="project" value="UniProtKB-KW"/>
</dbReference>
<dbReference type="GO" id="GO:0008360">
    <property type="term" value="P:regulation of cell shape"/>
    <property type="evidence" value="ECO:0007669"/>
    <property type="project" value="UniProtKB-UniRule"/>
</dbReference>
<dbReference type="CDD" id="cd00093">
    <property type="entry name" value="HTH_XRE"/>
    <property type="match status" value="1"/>
</dbReference>
<dbReference type="FunFam" id="1.10.260.40:FF:000014">
    <property type="entry name" value="Cytoskeleton protein RodZ"/>
    <property type="match status" value="1"/>
</dbReference>
<dbReference type="Gene3D" id="1.10.260.40">
    <property type="entry name" value="lambda repressor-like DNA-binding domains"/>
    <property type="match status" value="1"/>
</dbReference>
<dbReference type="HAMAP" id="MF_02017">
    <property type="entry name" value="RodZ"/>
    <property type="match status" value="1"/>
</dbReference>
<dbReference type="InterPro" id="IPR050400">
    <property type="entry name" value="Bact_Cytoskel_RodZ"/>
</dbReference>
<dbReference type="InterPro" id="IPR001387">
    <property type="entry name" value="Cro/C1-type_HTH"/>
</dbReference>
<dbReference type="InterPro" id="IPR010982">
    <property type="entry name" value="Lambda_DNA-bd_dom_sf"/>
</dbReference>
<dbReference type="InterPro" id="IPR023690">
    <property type="entry name" value="RodZ"/>
</dbReference>
<dbReference type="InterPro" id="IPR025194">
    <property type="entry name" value="RodZ-like_C"/>
</dbReference>
<dbReference type="NCBIfam" id="NF008109">
    <property type="entry name" value="PRK10856.1"/>
    <property type="match status" value="1"/>
</dbReference>
<dbReference type="PANTHER" id="PTHR34475">
    <property type="match status" value="1"/>
</dbReference>
<dbReference type="PANTHER" id="PTHR34475:SF1">
    <property type="entry name" value="CYTOSKELETON PROTEIN RODZ"/>
    <property type="match status" value="1"/>
</dbReference>
<dbReference type="Pfam" id="PF13413">
    <property type="entry name" value="HTH_25"/>
    <property type="match status" value="1"/>
</dbReference>
<dbReference type="Pfam" id="PF13464">
    <property type="entry name" value="RodZ_C"/>
    <property type="match status" value="1"/>
</dbReference>
<dbReference type="SMART" id="SM00530">
    <property type="entry name" value="HTH_XRE"/>
    <property type="match status" value="1"/>
</dbReference>
<dbReference type="SUPFAM" id="SSF47413">
    <property type="entry name" value="lambda repressor-like DNA-binding domains"/>
    <property type="match status" value="1"/>
</dbReference>
<dbReference type="PROSITE" id="PS50943">
    <property type="entry name" value="HTH_CROC1"/>
    <property type="match status" value="1"/>
</dbReference>
<organism>
    <name type="scientific">Salmonella heidelberg (strain SL476)</name>
    <dbReference type="NCBI Taxonomy" id="454169"/>
    <lineage>
        <taxon>Bacteria</taxon>
        <taxon>Pseudomonadati</taxon>
        <taxon>Pseudomonadota</taxon>
        <taxon>Gammaproteobacteria</taxon>
        <taxon>Enterobacterales</taxon>
        <taxon>Enterobacteriaceae</taxon>
        <taxon>Salmonella</taxon>
    </lineage>
</organism>
<sequence length="334" mass="35802">MNTEATHDQNEAQTTGVRLRNAREQLGLSQQAVAERLCLKVSTVRDIEEDKAPSDLASTFLRGYIRSYARLVHVPEEELLPGLEKQAPLRAAKVAPMQSFSLGKRRKKRDGWLMSFTWLVLFVVVGLTGAWWWQNHKAQQEEITTMADQSTAELNADKDSGQSVPLDTRDATSQDTTPAQTAPAPATPVDSTAATQTPAPTAAATQNTVVAPSQANVDTAATSAAPAATETPSALPTSQAGVAAPAADPNALVMNFTADCWLEVTDATGKKLFSGMQRKDGNLNLTGQAPYKLKIGAPAAVQIQYQGKPVDLSRFIRTNQVARLTLNAEPTPAQ</sequence>
<comment type="function">
    <text evidence="1">Cytoskeletal protein that is involved in cell-shape control through regulation of the length of the long axis.</text>
</comment>
<comment type="subcellular location">
    <subcellularLocation>
        <location evidence="1">Cell inner membrane</location>
        <topology evidence="1">Single-pass type II membrane protein</topology>
    </subcellularLocation>
    <text evidence="1">Forms helical filaments along the long axis of the cell.</text>
</comment>
<comment type="domain">
    <text evidence="1">The helix-turn-helix (HTH) motif in the cytoplasmic domain of the N-terminus is involved in the formation of spirals to maintain the rigid rod shape. As this protein is anchored in the cytoplasmic membrane, the HTH motif may contribute to protein-protein interactions to form the RodZ helix, which is localized beneath the cytoplasmic membrane. The C-terminal domain may be critical for determination of the rod shape by probably interacting with enzymes required for synthesis of the peptidoglycan layer, including PBPs in the periplasm.</text>
</comment>
<comment type="similarity">
    <text evidence="1">Belongs to the RodZ family.</text>
</comment>
<gene>
    <name evidence="1" type="primary">rodZ</name>
    <name type="ordered locus">SeHA_C2782</name>
</gene>
<name>RODZ_SALHS</name>
<feature type="chain" id="PRO_0000361853" description="Cytoskeleton protein RodZ">
    <location>
        <begin position="1"/>
        <end position="334"/>
    </location>
</feature>
<feature type="topological domain" description="Cytoplasmic" evidence="1">
    <location>
        <begin position="1"/>
        <end position="111"/>
    </location>
</feature>
<feature type="transmembrane region" description="Helical; Signal-anchor for type II membrane protein" evidence="1">
    <location>
        <begin position="112"/>
        <end position="132"/>
    </location>
</feature>
<feature type="topological domain" description="Periplasmic" evidence="1">
    <location>
        <begin position="133"/>
        <end position="334"/>
    </location>
</feature>
<feature type="domain" description="HTH cro/C1-type" evidence="1">
    <location>
        <begin position="19"/>
        <end position="71"/>
    </location>
</feature>
<feature type="DNA-binding region" description="H-T-H motif" evidence="1">
    <location>
        <begin position="30"/>
        <end position="49"/>
    </location>
</feature>
<feature type="region of interest" description="Disordered" evidence="2">
    <location>
        <begin position="154"/>
        <end position="241"/>
    </location>
</feature>
<feature type="compositionally biased region" description="Low complexity" evidence="2">
    <location>
        <begin position="176"/>
        <end position="211"/>
    </location>
</feature>
<feature type="compositionally biased region" description="Low complexity" evidence="2">
    <location>
        <begin position="219"/>
        <end position="241"/>
    </location>
</feature>
<protein>
    <recommendedName>
        <fullName evidence="1">Cytoskeleton protein RodZ</fullName>
    </recommendedName>
</protein>
<reference key="1">
    <citation type="journal article" date="2011" name="J. Bacteriol.">
        <title>Comparative genomics of 28 Salmonella enterica isolates: evidence for CRISPR-mediated adaptive sublineage evolution.</title>
        <authorList>
            <person name="Fricke W.F."/>
            <person name="Mammel M.K."/>
            <person name="McDermott P.F."/>
            <person name="Tartera C."/>
            <person name="White D.G."/>
            <person name="Leclerc J.E."/>
            <person name="Ravel J."/>
            <person name="Cebula T.A."/>
        </authorList>
    </citation>
    <scope>NUCLEOTIDE SEQUENCE [LARGE SCALE GENOMIC DNA]</scope>
    <source>
        <strain>SL476</strain>
    </source>
</reference>
<keyword id="KW-0997">Cell inner membrane</keyword>
<keyword id="KW-1003">Cell membrane</keyword>
<keyword id="KW-0133">Cell shape</keyword>
<keyword id="KW-0238">DNA-binding</keyword>
<keyword id="KW-0472">Membrane</keyword>
<keyword id="KW-0735">Signal-anchor</keyword>
<keyword id="KW-0812">Transmembrane</keyword>
<keyword id="KW-1133">Transmembrane helix</keyword>
<accession>B4TD94</accession>
<evidence type="ECO:0000255" key="1">
    <source>
        <dbReference type="HAMAP-Rule" id="MF_02017"/>
    </source>
</evidence>
<evidence type="ECO:0000256" key="2">
    <source>
        <dbReference type="SAM" id="MobiDB-lite"/>
    </source>
</evidence>
<proteinExistence type="inferred from homology"/>